<gene>
    <name evidence="1" type="primary">rpiA</name>
    <name type="ordered locus">BPP1700</name>
</gene>
<sequence length="226" mass="23685">MLTQQELKQQAADAALELVEQVAGPDVIIGVGTGSTADLFIDGLARFKGRLRGTVASSERSAARLAGHGLAVLDLNDVQSMPIYVDGADEIDPNLHMIKGGGGALTREKIVASVARRYICIADESKLVERLGRFPLPVEVIPMARNAVARGLSRLGGQPALREGFVTDNGNIILDVAGLSIADAPGLEKTINDIPGVVTCGLFALAGADVALLATQDGIRRLERRG</sequence>
<protein>
    <recommendedName>
        <fullName evidence="1">Ribose-5-phosphate isomerase A</fullName>
        <ecNumber evidence="1">5.3.1.6</ecNumber>
    </recommendedName>
    <alternativeName>
        <fullName evidence="1">Phosphoriboisomerase A</fullName>
        <shortName evidence="1">PRI</shortName>
    </alternativeName>
</protein>
<evidence type="ECO:0000255" key="1">
    <source>
        <dbReference type="HAMAP-Rule" id="MF_00170"/>
    </source>
</evidence>
<accession>Q7W9Q5</accession>
<organism>
    <name type="scientific">Bordetella parapertussis (strain 12822 / ATCC BAA-587 / NCTC 13253)</name>
    <dbReference type="NCBI Taxonomy" id="257311"/>
    <lineage>
        <taxon>Bacteria</taxon>
        <taxon>Pseudomonadati</taxon>
        <taxon>Pseudomonadota</taxon>
        <taxon>Betaproteobacteria</taxon>
        <taxon>Burkholderiales</taxon>
        <taxon>Alcaligenaceae</taxon>
        <taxon>Bordetella</taxon>
    </lineage>
</organism>
<proteinExistence type="inferred from homology"/>
<dbReference type="EC" id="5.3.1.6" evidence="1"/>
<dbReference type="EMBL" id="BX640428">
    <property type="protein sequence ID" value="CAE37001.1"/>
    <property type="molecule type" value="Genomic_DNA"/>
</dbReference>
<dbReference type="RefSeq" id="WP_003813244.1">
    <property type="nucleotide sequence ID" value="NC_002928.3"/>
</dbReference>
<dbReference type="SMR" id="Q7W9Q5"/>
<dbReference type="GeneID" id="93203459"/>
<dbReference type="KEGG" id="bpa:BPP1700"/>
<dbReference type="HOGENOM" id="CLU_056590_1_1_4"/>
<dbReference type="UniPathway" id="UPA00115">
    <property type="reaction ID" value="UER00412"/>
</dbReference>
<dbReference type="Proteomes" id="UP000001421">
    <property type="component" value="Chromosome"/>
</dbReference>
<dbReference type="GO" id="GO:0005829">
    <property type="term" value="C:cytosol"/>
    <property type="evidence" value="ECO:0007669"/>
    <property type="project" value="TreeGrafter"/>
</dbReference>
<dbReference type="GO" id="GO:0004751">
    <property type="term" value="F:ribose-5-phosphate isomerase activity"/>
    <property type="evidence" value="ECO:0007669"/>
    <property type="project" value="UniProtKB-UniRule"/>
</dbReference>
<dbReference type="GO" id="GO:0006014">
    <property type="term" value="P:D-ribose metabolic process"/>
    <property type="evidence" value="ECO:0007669"/>
    <property type="project" value="TreeGrafter"/>
</dbReference>
<dbReference type="GO" id="GO:0009052">
    <property type="term" value="P:pentose-phosphate shunt, non-oxidative branch"/>
    <property type="evidence" value="ECO:0007669"/>
    <property type="project" value="UniProtKB-UniRule"/>
</dbReference>
<dbReference type="CDD" id="cd01398">
    <property type="entry name" value="RPI_A"/>
    <property type="match status" value="1"/>
</dbReference>
<dbReference type="FunFam" id="3.40.50.1360:FF:000001">
    <property type="entry name" value="Ribose-5-phosphate isomerase A"/>
    <property type="match status" value="1"/>
</dbReference>
<dbReference type="Gene3D" id="3.30.70.260">
    <property type="match status" value="1"/>
</dbReference>
<dbReference type="Gene3D" id="3.40.50.1360">
    <property type="match status" value="1"/>
</dbReference>
<dbReference type="HAMAP" id="MF_00170">
    <property type="entry name" value="Rib_5P_isom_A"/>
    <property type="match status" value="1"/>
</dbReference>
<dbReference type="InterPro" id="IPR037171">
    <property type="entry name" value="NagB/RpiA_transferase-like"/>
</dbReference>
<dbReference type="InterPro" id="IPR020672">
    <property type="entry name" value="Ribose5P_isomerase_typA_subgr"/>
</dbReference>
<dbReference type="InterPro" id="IPR004788">
    <property type="entry name" value="Ribose5P_isomerase_type_A"/>
</dbReference>
<dbReference type="NCBIfam" id="NF001924">
    <property type="entry name" value="PRK00702.1"/>
    <property type="match status" value="1"/>
</dbReference>
<dbReference type="NCBIfam" id="TIGR00021">
    <property type="entry name" value="rpiA"/>
    <property type="match status" value="1"/>
</dbReference>
<dbReference type="PANTHER" id="PTHR11934">
    <property type="entry name" value="RIBOSE-5-PHOSPHATE ISOMERASE"/>
    <property type="match status" value="1"/>
</dbReference>
<dbReference type="PANTHER" id="PTHR11934:SF0">
    <property type="entry name" value="RIBOSE-5-PHOSPHATE ISOMERASE"/>
    <property type="match status" value="1"/>
</dbReference>
<dbReference type="Pfam" id="PF06026">
    <property type="entry name" value="Rib_5-P_isom_A"/>
    <property type="match status" value="1"/>
</dbReference>
<dbReference type="SUPFAM" id="SSF75445">
    <property type="entry name" value="D-ribose-5-phosphate isomerase (RpiA), lid domain"/>
    <property type="match status" value="1"/>
</dbReference>
<dbReference type="SUPFAM" id="SSF100950">
    <property type="entry name" value="NagB/RpiA/CoA transferase-like"/>
    <property type="match status" value="1"/>
</dbReference>
<comment type="function">
    <text evidence="1">Catalyzes the reversible conversion of ribose-5-phosphate to ribulose 5-phosphate.</text>
</comment>
<comment type="catalytic activity">
    <reaction evidence="1">
        <text>aldehydo-D-ribose 5-phosphate = D-ribulose 5-phosphate</text>
        <dbReference type="Rhea" id="RHEA:14657"/>
        <dbReference type="ChEBI" id="CHEBI:58121"/>
        <dbReference type="ChEBI" id="CHEBI:58273"/>
        <dbReference type="EC" id="5.3.1.6"/>
    </reaction>
</comment>
<comment type="pathway">
    <text evidence="1">Carbohydrate degradation; pentose phosphate pathway; D-ribose 5-phosphate from D-ribulose 5-phosphate (non-oxidative stage): step 1/1.</text>
</comment>
<comment type="subunit">
    <text evidence="1">Homodimer.</text>
</comment>
<comment type="similarity">
    <text evidence="1">Belongs to the ribose 5-phosphate isomerase family.</text>
</comment>
<name>RPIA_BORPA</name>
<feature type="chain" id="PRO_0000158393" description="Ribose-5-phosphate isomerase A">
    <location>
        <begin position="1"/>
        <end position="226"/>
    </location>
</feature>
<feature type="active site" description="Proton acceptor" evidence="1">
    <location>
        <position position="108"/>
    </location>
</feature>
<feature type="binding site" evidence="1">
    <location>
        <begin position="33"/>
        <end position="36"/>
    </location>
    <ligand>
        <name>substrate</name>
    </ligand>
</feature>
<feature type="binding site" evidence="1">
    <location>
        <begin position="86"/>
        <end position="89"/>
    </location>
    <ligand>
        <name>substrate</name>
    </ligand>
</feature>
<feature type="binding site" evidence="1">
    <location>
        <begin position="99"/>
        <end position="102"/>
    </location>
    <ligand>
        <name>substrate</name>
    </ligand>
</feature>
<feature type="binding site" evidence="1">
    <location>
        <position position="126"/>
    </location>
    <ligand>
        <name>substrate</name>
    </ligand>
</feature>
<keyword id="KW-0413">Isomerase</keyword>
<reference key="1">
    <citation type="journal article" date="2003" name="Nat. Genet.">
        <title>Comparative analysis of the genome sequences of Bordetella pertussis, Bordetella parapertussis and Bordetella bronchiseptica.</title>
        <authorList>
            <person name="Parkhill J."/>
            <person name="Sebaihia M."/>
            <person name="Preston A."/>
            <person name="Murphy L.D."/>
            <person name="Thomson N.R."/>
            <person name="Harris D.E."/>
            <person name="Holden M.T.G."/>
            <person name="Churcher C.M."/>
            <person name="Bentley S.D."/>
            <person name="Mungall K.L."/>
            <person name="Cerdeno-Tarraga A.-M."/>
            <person name="Temple L."/>
            <person name="James K.D."/>
            <person name="Harris B."/>
            <person name="Quail M.A."/>
            <person name="Achtman M."/>
            <person name="Atkin R."/>
            <person name="Baker S."/>
            <person name="Basham D."/>
            <person name="Bason N."/>
            <person name="Cherevach I."/>
            <person name="Chillingworth T."/>
            <person name="Collins M."/>
            <person name="Cronin A."/>
            <person name="Davis P."/>
            <person name="Doggett J."/>
            <person name="Feltwell T."/>
            <person name="Goble A."/>
            <person name="Hamlin N."/>
            <person name="Hauser H."/>
            <person name="Holroyd S."/>
            <person name="Jagels K."/>
            <person name="Leather S."/>
            <person name="Moule S."/>
            <person name="Norberczak H."/>
            <person name="O'Neil S."/>
            <person name="Ormond D."/>
            <person name="Price C."/>
            <person name="Rabbinowitsch E."/>
            <person name="Rutter S."/>
            <person name="Sanders M."/>
            <person name="Saunders D."/>
            <person name="Seeger K."/>
            <person name="Sharp S."/>
            <person name="Simmonds M."/>
            <person name="Skelton J."/>
            <person name="Squares R."/>
            <person name="Squares S."/>
            <person name="Stevens K."/>
            <person name="Unwin L."/>
            <person name="Whitehead S."/>
            <person name="Barrell B.G."/>
            <person name="Maskell D.J."/>
        </authorList>
    </citation>
    <scope>NUCLEOTIDE SEQUENCE [LARGE SCALE GENOMIC DNA]</scope>
    <source>
        <strain>12822 / ATCC BAA-587 / NCTC 13253</strain>
    </source>
</reference>